<gene>
    <name type="primary">EMB2204</name>
    <name type="ordered locus">At1g22090</name>
    <name type="ORF">F2E2.16</name>
</gene>
<protein>
    <recommendedName>
        <fullName>UPF0725 protein EMB2204</fullName>
    </recommendedName>
    <alternativeName>
        <fullName>Protein EMBRYO DEFECTIVE 2204</fullName>
    </alternativeName>
</protein>
<keyword id="KW-0217">Developmental protein</keyword>
<keyword id="KW-1185">Reference proteome</keyword>
<comment type="function">
    <text evidence="1">May be involved in embryogenesis.</text>
</comment>
<comment type="similarity">
    <text evidence="2">Belongs to the UPF0725 (EMB2204) family.</text>
</comment>
<comment type="sequence caution" evidence="2">
    <conflict type="erroneous gene model prediction">
        <sequence resource="EMBL-CDS" id="AAF86551"/>
    </conflict>
</comment>
<sequence length="329" mass="38640">MSRRVEYTLAPPQRNESDGFDYPDGIPISYNLHRLRHFECEGSYPKYPYGSLVKFYAMVGLHRYNVLEGKNLQLDTLKSFNMRINCGASSYYITLAARVPDSGLKQIFQVLVHEERLGSLDMTCTIARPRVTTNVPFLRPHSESEYDYMDNDELPDWPSEIAFDDTKRFHLVKESELRDNDWIRLYLELTLVAHDRFLTVHYLSQLEIVKVAIEEVEQPNASLNTKTTFVYITYKDLAKAQIGEPVDRKAIVRKIINETTGLLRLRGDYWSGERSVITPEEEYMLLHGGEKVRNNEQRSKKLKRRVGVHRLWRWWYQAYKNRGLRSSSY</sequence>
<dbReference type="EMBL" id="AC069252">
    <property type="protein sequence ID" value="AAF86551.1"/>
    <property type="status" value="ALT_SEQ"/>
    <property type="molecule type" value="Genomic_DNA"/>
</dbReference>
<dbReference type="EMBL" id="CP002684">
    <property type="protein sequence ID" value="AEE30196.1"/>
    <property type="molecule type" value="Genomic_DNA"/>
</dbReference>
<dbReference type="EMBL" id="AY084660">
    <property type="protein sequence ID" value="AAM61223.1"/>
    <property type="molecule type" value="mRNA"/>
</dbReference>
<dbReference type="PIR" id="G86353">
    <property type="entry name" value="G86353"/>
</dbReference>
<dbReference type="RefSeq" id="NP_564157.1">
    <property type="nucleotide sequence ID" value="NM_102059.2"/>
</dbReference>
<dbReference type="SMR" id="Q9LM50"/>
<dbReference type="PaxDb" id="3702-AT1G22090.1"/>
<dbReference type="ProteomicsDB" id="221957"/>
<dbReference type="EnsemblPlants" id="AT1G22090.1">
    <property type="protein sequence ID" value="AT1G22090.1"/>
    <property type="gene ID" value="AT1G22090"/>
</dbReference>
<dbReference type="GeneID" id="838814"/>
<dbReference type="Gramene" id="AT1G22090.1">
    <property type="protein sequence ID" value="AT1G22090.1"/>
    <property type="gene ID" value="AT1G22090"/>
</dbReference>
<dbReference type="KEGG" id="ath:AT1G22090"/>
<dbReference type="Araport" id="AT1G22090"/>
<dbReference type="TAIR" id="AT1G22090">
    <property type="gene designation" value="EMB2204"/>
</dbReference>
<dbReference type="HOGENOM" id="CLU_053767_0_0_1"/>
<dbReference type="InParanoid" id="Q9LM50"/>
<dbReference type="OMA" id="ESEYDYM"/>
<dbReference type="OrthoDB" id="1041801at2759"/>
<dbReference type="PhylomeDB" id="Q9LM50"/>
<dbReference type="PRO" id="PR:Q9LM50"/>
<dbReference type="Proteomes" id="UP000006548">
    <property type="component" value="Chromosome 1"/>
</dbReference>
<dbReference type="ExpressionAtlas" id="Q9LM50">
    <property type="expression patterns" value="baseline and differential"/>
</dbReference>
<dbReference type="InterPro" id="IPR006462">
    <property type="entry name" value="MS5"/>
</dbReference>
<dbReference type="NCBIfam" id="TIGR01572">
    <property type="entry name" value="A_thl_para_3677"/>
    <property type="match status" value="1"/>
</dbReference>
<dbReference type="PANTHER" id="PTHR31260">
    <property type="entry name" value="CYSTATIN/MONELLIN SUPERFAMILY PROTEIN"/>
    <property type="match status" value="1"/>
</dbReference>
<dbReference type="PANTHER" id="PTHR31260:SF46">
    <property type="entry name" value="UPF0725 PROTEIN EMB2204"/>
    <property type="match status" value="1"/>
</dbReference>
<dbReference type="Pfam" id="PF04776">
    <property type="entry name" value="protein_MS5"/>
    <property type="match status" value="1"/>
</dbReference>
<evidence type="ECO:0000269" key="1">
    <source>
    </source>
</evidence>
<evidence type="ECO:0000305" key="2"/>
<feature type="chain" id="PRO_0000363132" description="UPF0725 protein EMB2204">
    <location>
        <begin position="1"/>
        <end position="329"/>
    </location>
</feature>
<feature type="sequence conflict" description="In Ref. 3; AAM61223." evidence="2" ref="3">
    <original>K</original>
    <variation>R</variation>
    <location>
        <position position="254"/>
    </location>
</feature>
<reference key="1">
    <citation type="journal article" date="2000" name="Nature">
        <title>Sequence and analysis of chromosome 1 of the plant Arabidopsis thaliana.</title>
        <authorList>
            <person name="Theologis A."/>
            <person name="Ecker J.R."/>
            <person name="Palm C.J."/>
            <person name="Federspiel N.A."/>
            <person name="Kaul S."/>
            <person name="White O."/>
            <person name="Alonso J."/>
            <person name="Altafi H."/>
            <person name="Araujo R."/>
            <person name="Bowman C.L."/>
            <person name="Brooks S.Y."/>
            <person name="Buehler E."/>
            <person name="Chan A."/>
            <person name="Chao Q."/>
            <person name="Chen H."/>
            <person name="Cheuk R.F."/>
            <person name="Chin C.W."/>
            <person name="Chung M.K."/>
            <person name="Conn L."/>
            <person name="Conway A.B."/>
            <person name="Conway A.R."/>
            <person name="Creasy T.H."/>
            <person name="Dewar K."/>
            <person name="Dunn P."/>
            <person name="Etgu P."/>
            <person name="Feldblyum T.V."/>
            <person name="Feng J.-D."/>
            <person name="Fong B."/>
            <person name="Fujii C.Y."/>
            <person name="Gill J.E."/>
            <person name="Goldsmith A.D."/>
            <person name="Haas B."/>
            <person name="Hansen N.F."/>
            <person name="Hughes B."/>
            <person name="Huizar L."/>
            <person name="Hunter J.L."/>
            <person name="Jenkins J."/>
            <person name="Johnson-Hopson C."/>
            <person name="Khan S."/>
            <person name="Khaykin E."/>
            <person name="Kim C.J."/>
            <person name="Koo H.L."/>
            <person name="Kremenetskaia I."/>
            <person name="Kurtz D.B."/>
            <person name="Kwan A."/>
            <person name="Lam B."/>
            <person name="Langin-Hooper S."/>
            <person name="Lee A."/>
            <person name="Lee J.M."/>
            <person name="Lenz C.A."/>
            <person name="Li J.H."/>
            <person name="Li Y.-P."/>
            <person name="Lin X."/>
            <person name="Liu S.X."/>
            <person name="Liu Z.A."/>
            <person name="Luros J.S."/>
            <person name="Maiti R."/>
            <person name="Marziali A."/>
            <person name="Militscher J."/>
            <person name="Miranda M."/>
            <person name="Nguyen M."/>
            <person name="Nierman W.C."/>
            <person name="Osborne B.I."/>
            <person name="Pai G."/>
            <person name="Peterson J."/>
            <person name="Pham P.K."/>
            <person name="Rizzo M."/>
            <person name="Rooney T."/>
            <person name="Rowley D."/>
            <person name="Sakano H."/>
            <person name="Salzberg S.L."/>
            <person name="Schwartz J.R."/>
            <person name="Shinn P."/>
            <person name="Southwick A.M."/>
            <person name="Sun H."/>
            <person name="Tallon L.J."/>
            <person name="Tambunga G."/>
            <person name="Toriumi M.J."/>
            <person name="Town C.D."/>
            <person name="Utterback T."/>
            <person name="Van Aken S."/>
            <person name="Vaysberg M."/>
            <person name="Vysotskaia V.S."/>
            <person name="Walker M."/>
            <person name="Wu D."/>
            <person name="Yu G."/>
            <person name="Fraser C.M."/>
            <person name="Venter J.C."/>
            <person name="Davis R.W."/>
        </authorList>
    </citation>
    <scope>NUCLEOTIDE SEQUENCE [LARGE SCALE GENOMIC DNA]</scope>
    <source>
        <strain>cv. Columbia</strain>
    </source>
</reference>
<reference key="2">
    <citation type="journal article" date="2017" name="Plant J.">
        <title>Araport11: a complete reannotation of the Arabidopsis thaliana reference genome.</title>
        <authorList>
            <person name="Cheng C.Y."/>
            <person name="Krishnakumar V."/>
            <person name="Chan A.P."/>
            <person name="Thibaud-Nissen F."/>
            <person name="Schobel S."/>
            <person name="Town C.D."/>
        </authorList>
    </citation>
    <scope>GENOME REANNOTATION</scope>
    <source>
        <strain>cv. Columbia</strain>
    </source>
</reference>
<reference key="3">
    <citation type="submission" date="2002-03" db="EMBL/GenBank/DDBJ databases">
        <title>Full-length cDNA from Arabidopsis thaliana.</title>
        <authorList>
            <person name="Brover V.V."/>
            <person name="Troukhan M.E."/>
            <person name="Alexandrov N.A."/>
            <person name="Lu Y.-P."/>
            <person name="Flavell R.B."/>
            <person name="Feldmann K.A."/>
        </authorList>
    </citation>
    <scope>NUCLEOTIDE SEQUENCE [LARGE SCALE MRNA]</scope>
</reference>
<reference key="4">
    <citation type="journal article" date="2004" name="Plant Physiol.">
        <title>Identification of genes required for embryo development in Arabidopsis.</title>
        <authorList>
            <person name="Tzafrir I."/>
            <person name="Pena-Muralla R."/>
            <person name="Dickerman A."/>
            <person name="Berg M."/>
            <person name="Rogers R."/>
            <person name="Hutchens S."/>
            <person name="Sweeney T.C."/>
            <person name="McElver J."/>
            <person name="Aux G."/>
            <person name="Patton D."/>
            <person name="Meinke D."/>
        </authorList>
    </citation>
    <scope>FUNCTION</scope>
</reference>
<accession>Q9LM50</accession>
<accession>Q8LFT0</accession>
<proteinExistence type="evidence at transcript level"/>
<name>E2204_ARATH</name>
<organism>
    <name type="scientific">Arabidopsis thaliana</name>
    <name type="common">Mouse-ear cress</name>
    <dbReference type="NCBI Taxonomy" id="3702"/>
    <lineage>
        <taxon>Eukaryota</taxon>
        <taxon>Viridiplantae</taxon>
        <taxon>Streptophyta</taxon>
        <taxon>Embryophyta</taxon>
        <taxon>Tracheophyta</taxon>
        <taxon>Spermatophyta</taxon>
        <taxon>Magnoliopsida</taxon>
        <taxon>eudicotyledons</taxon>
        <taxon>Gunneridae</taxon>
        <taxon>Pentapetalae</taxon>
        <taxon>rosids</taxon>
        <taxon>malvids</taxon>
        <taxon>Brassicales</taxon>
        <taxon>Brassicaceae</taxon>
        <taxon>Camelineae</taxon>
        <taxon>Arabidopsis</taxon>
    </lineage>
</organism>